<name>RF2_CAMLR</name>
<reference key="1">
    <citation type="journal article" date="2008" name="Foodborne Pathog. Dis.">
        <title>The complete genome sequence and analysis of the human pathogen Campylobacter lari.</title>
        <authorList>
            <person name="Miller W.G."/>
            <person name="Wang G."/>
            <person name="Binnewies T.T."/>
            <person name="Parker C.T."/>
        </authorList>
    </citation>
    <scope>NUCLEOTIDE SEQUENCE [LARGE SCALE GENOMIC DNA]</scope>
    <source>
        <strain>RM2100 / D67 / ATCC BAA-1060</strain>
    </source>
</reference>
<sequence>MDNYEYSELLKKLKNKVGNIASIIKPEEIKARLKEIENLENSPSFWSDVKQAGIIGKEKTKISNLLKNYENAFNALNDASELFDLANSENDLDTIQALFDDAPNLEDLIVSLEISMLLSGENDGKNAIVSIHPGAGGTESNDWASMLYRMYLRFCEREGFKVETLDFQEGEEAGLKDVSFLVKGENAYGYLKAENGIHRLVRTSPFDSAGRRHTSFSSVMVSPELDDDIEIEIEDKDIRIDYYRASGAGGQHVNKTESAVRITHMPSGIVVQCQNDRSQHKNKATAFKMLKSRLYELELMKQQDEANSSEKSEIGWGHQIRSYVLFPYQQVKDTRSNEAFSQVDNILDGDIKKMIEGVLIAQKAQD</sequence>
<gene>
    <name evidence="1" type="primary">prfB</name>
    <name type="ordered locus">Cla_0259</name>
</gene>
<evidence type="ECO:0000255" key="1">
    <source>
        <dbReference type="HAMAP-Rule" id="MF_00094"/>
    </source>
</evidence>
<keyword id="KW-0963">Cytoplasm</keyword>
<keyword id="KW-0488">Methylation</keyword>
<keyword id="KW-0648">Protein biosynthesis</keyword>
<keyword id="KW-1185">Reference proteome</keyword>
<comment type="function">
    <text evidence="1">Peptide chain release factor 2 directs the termination of translation in response to the peptide chain termination codons UGA and UAA.</text>
</comment>
<comment type="subcellular location">
    <subcellularLocation>
        <location evidence="1">Cytoplasm</location>
    </subcellularLocation>
</comment>
<comment type="PTM">
    <text evidence="1">Methylated by PrmC. Methylation increases the termination efficiency of RF2.</text>
</comment>
<comment type="similarity">
    <text evidence="1">Belongs to the prokaryotic/mitochondrial release factor family.</text>
</comment>
<accession>B9KEY7</accession>
<dbReference type="EMBL" id="CP000932">
    <property type="protein sequence ID" value="ACM63622.1"/>
    <property type="molecule type" value="Genomic_DNA"/>
</dbReference>
<dbReference type="RefSeq" id="WP_012661006.1">
    <property type="nucleotide sequence ID" value="NC_012039.1"/>
</dbReference>
<dbReference type="SMR" id="B9KEY7"/>
<dbReference type="STRING" id="306263.Cla_0259"/>
<dbReference type="KEGG" id="cla:CLA_0259"/>
<dbReference type="PATRIC" id="fig|306263.5.peg.257"/>
<dbReference type="eggNOG" id="COG1186">
    <property type="taxonomic scope" value="Bacteria"/>
</dbReference>
<dbReference type="HOGENOM" id="CLU_036856_6_0_7"/>
<dbReference type="Proteomes" id="UP000007727">
    <property type="component" value="Chromosome"/>
</dbReference>
<dbReference type="GO" id="GO:0005737">
    <property type="term" value="C:cytoplasm"/>
    <property type="evidence" value="ECO:0007669"/>
    <property type="project" value="UniProtKB-SubCell"/>
</dbReference>
<dbReference type="GO" id="GO:0016149">
    <property type="term" value="F:translation release factor activity, codon specific"/>
    <property type="evidence" value="ECO:0007669"/>
    <property type="project" value="UniProtKB-UniRule"/>
</dbReference>
<dbReference type="FunFam" id="3.30.160.20:FF:000010">
    <property type="entry name" value="Peptide chain release factor 2"/>
    <property type="match status" value="1"/>
</dbReference>
<dbReference type="Gene3D" id="3.30.160.20">
    <property type="match status" value="1"/>
</dbReference>
<dbReference type="Gene3D" id="3.30.70.1660">
    <property type="match status" value="1"/>
</dbReference>
<dbReference type="Gene3D" id="1.20.58.410">
    <property type="entry name" value="Release factor"/>
    <property type="match status" value="1"/>
</dbReference>
<dbReference type="HAMAP" id="MF_00094">
    <property type="entry name" value="Rel_fac_2"/>
    <property type="match status" value="1"/>
</dbReference>
<dbReference type="InterPro" id="IPR005139">
    <property type="entry name" value="PCRF"/>
</dbReference>
<dbReference type="InterPro" id="IPR000352">
    <property type="entry name" value="Pep_chain_release_fac_I"/>
</dbReference>
<dbReference type="InterPro" id="IPR045853">
    <property type="entry name" value="Pep_chain_release_fac_I_sf"/>
</dbReference>
<dbReference type="InterPro" id="IPR004374">
    <property type="entry name" value="PrfB"/>
</dbReference>
<dbReference type="NCBIfam" id="TIGR00020">
    <property type="entry name" value="prfB"/>
    <property type="match status" value="1"/>
</dbReference>
<dbReference type="PANTHER" id="PTHR43116:SF3">
    <property type="entry name" value="CLASS I PEPTIDE CHAIN RELEASE FACTOR"/>
    <property type="match status" value="1"/>
</dbReference>
<dbReference type="PANTHER" id="PTHR43116">
    <property type="entry name" value="PEPTIDE CHAIN RELEASE FACTOR 2"/>
    <property type="match status" value="1"/>
</dbReference>
<dbReference type="Pfam" id="PF03462">
    <property type="entry name" value="PCRF"/>
    <property type="match status" value="1"/>
</dbReference>
<dbReference type="Pfam" id="PF00472">
    <property type="entry name" value="RF-1"/>
    <property type="match status" value="1"/>
</dbReference>
<dbReference type="SMART" id="SM00937">
    <property type="entry name" value="PCRF"/>
    <property type="match status" value="1"/>
</dbReference>
<dbReference type="SUPFAM" id="SSF75620">
    <property type="entry name" value="Release factor"/>
    <property type="match status" value="1"/>
</dbReference>
<dbReference type="PROSITE" id="PS00745">
    <property type="entry name" value="RF_PROK_I"/>
    <property type="match status" value="1"/>
</dbReference>
<proteinExistence type="inferred from homology"/>
<organism>
    <name type="scientific">Campylobacter lari (strain RM2100 / D67 / ATCC BAA-1060)</name>
    <dbReference type="NCBI Taxonomy" id="306263"/>
    <lineage>
        <taxon>Bacteria</taxon>
        <taxon>Pseudomonadati</taxon>
        <taxon>Campylobacterota</taxon>
        <taxon>Epsilonproteobacteria</taxon>
        <taxon>Campylobacterales</taxon>
        <taxon>Campylobacteraceae</taxon>
        <taxon>Campylobacter</taxon>
    </lineage>
</organism>
<feature type="chain" id="PRO_1000193547" description="Peptide chain release factor 2">
    <location>
        <begin position="1"/>
        <end position="366"/>
    </location>
</feature>
<feature type="modified residue" description="N5-methylglutamine" evidence="1">
    <location>
        <position position="251"/>
    </location>
</feature>
<protein>
    <recommendedName>
        <fullName evidence="1">Peptide chain release factor 2</fullName>
        <shortName evidence="1">RF-2</shortName>
    </recommendedName>
</protein>